<evidence type="ECO:0000255" key="1">
    <source>
        <dbReference type="HAMAP-Rule" id="MF_00045"/>
    </source>
</evidence>
<keyword id="KW-0963">Cytoplasm</keyword>
<keyword id="KW-0269">Exonuclease</keyword>
<keyword id="KW-0378">Hydrolase</keyword>
<keyword id="KW-0540">Nuclease</keyword>
<keyword id="KW-1185">Reference proteome</keyword>
<gene>
    <name evidence="1" type="primary">orn</name>
    <name type="ordered locus">XOO2209</name>
</gene>
<comment type="function">
    <text evidence="1">3'-to-5' exoribonuclease specific for small oligoribonucleotides.</text>
</comment>
<comment type="subcellular location">
    <subcellularLocation>
        <location evidence="1">Cytoplasm</location>
    </subcellularLocation>
</comment>
<comment type="similarity">
    <text evidence="1">Belongs to the oligoribonuclease family.</text>
</comment>
<sequence length="194" mass="21920">MAENLAGNDRLIWIDLEMTGLDTDRDSIIEIATIVTDAQLNVLAEGPELAIAHPLETLEAMDEWNRNQHRRSGLWQRVLDSQVTHAQAEAQTVAFLGEWIRAGASPMCGNSICQDRRFLHRQMSRLERYFHYRNLDVSTIKELARRWAPTVANGFAKSSAHTALSDVRDSINELRHYRQFMGALGGDTAMDVEG</sequence>
<proteinExistence type="inferred from homology"/>
<accession>Q5H0Q8</accession>
<organism>
    <name type="scientific">Xanthomonas oryzae pv. oryzae (strain KACC10331 / KXO85)</name>
    <dbReference type="NCBI Taxonomy" id="291331"/>
    <lineage>
        <taxon>Bacteria</taxon>
        <taxon>Pseudomonadati</taxon>
        <taxon>Pseudomonadota</taxon>
        <taxon>Gammaproteobacteria</taxon>
        <taxon>Lysobacterales</taxon>
        <taxon>Lysobacteraceae</taxon>
        <taxon>Xanthomonas</taxon>
    </lineage>
</organism>
<feature type="chain" id="PRO_0000111085" description="Oligoribonuclease">
    <location>
        <begin position="1"/>
        <end position="194"/>
    </location>
</feature>
<feature type="domain" description="Exonuclease" evidence="1">
    <location>
        <begin position="11"/>
        <end position="174"/>
    </location>
</feature>
<feature type="active site" evidence="1">
    <location>
        <position position="132"/>
    </location>
</feature>
<reference key="1">
    <citation type="journal article" date="2005" name="Nucleic Acids Res.">
        <title>The genome sequence of Xanthomonas oryzae pathovar oryzae KACC10331, the bacterial blight pathogen of rice.</title>
        <authorList>
            <person name="Lee B.-M."/>
            <person name="Park Y.-J."/>
            <person name="Park D.-S."/>
            <person name="Kang H.-W."/>
            <person name="Kim J.-G."/>
            <person name="Song E.-S."/>
            <person name="Park I.-C."/>
            <person name="Yoon U.-H."/>
            <person name="Hahn J.-H."/>
            <person name="Koo B.-S."/>
            <person name="Lee G.-B."/>
            <person name="Kim H."/>
            <person name="Park H.-S."/>
            <person name="Yoon K.-O."/>
            <person name="Kim J.-H."/>
            <person name="Jung C.-H."/>
            <person name="Koh N.-H."/>
            <person name="Seo J.-S."/>
            <person name="Go S.-J."/>
        </authorList>
    </citation>
    <scope>NUCLEOTIDE SEQUENCE [LARGE SCALE GENOMIC DNA]</scope>
    <source>
        <strain>KACC10331 / KXO85</strain>
    </source>
</reference>
<dbReference type="EC" id="3.1.15.-" evidence="1"/>
<dbReference type="EMBL" id="AE013598">
    <property type="protein sequence ID" value="AAW75463.1"/>
    <property type="molecule type" value="Genomic_DNA"/>
</dbReference>
<dbReference type="SMR" id="Q5H0Q8"/>
<dbReference type="STRING" id="291331.XOO2209"/>
<dbReference type="KEGG" id="xoo:XOO2209"/>
<dbReference type="HOGENOM" id="CLU_064761_2_0_6"/>
<dbReference type="Proteomes" id="UP000006735">
    <property type="component" value="Chromosome"/>
</dbReference>
<dbReference type="GO" id="GO:0005737">
    <property type="term" value="C:cytoplasm"/>
    <property type="evidence" value="ECO:0007669"/>
    <property type="project" value="UniProtKB-SubCell"/>
</dbReference>
<dbReference type="GO" id="GO:0000175">
    <property type="term" value="F:3'-5'-RNA exonuclease activity"/>
    <property type="evidence" value="ECO:0007669"/>
    <property type="project" value="InterPro"/>
</dbReference>
<dbReference type="GO" id="GO:0003676">
    <property type="term" value="F:nucleic acid binding"/>
    <property type="evidence" value="ECO:0007669"/>
    <property type="project" value="InterPro"/>
</dbReference>
<dbReference type="GO" id="GO:0006259">
    <property type="term" value="P:DNA metabolic process"/>
    <property type="evidence" value="ECO:0007669"/>
    <property type="project" value="UniProtKB-ARBA"/>
</dbReference>
<dbReference type="CDD" id="cd06135">
    <property type="entry name" value="Orn"/>
    <property type="match status" value="1"/>
</dbReference>
<dbReference type="FunFam" id="3.30.420.10:FF:000003">
    <property type="entry name" value="Oligoribonuclease"/>
    <property type="match status" value="1"/>
</dbReference>
<dbReference type="Gene3D" id="3.30.420.10">
    <property type="entry name" value="Ribonuclease H-like superfamily/Ribonuclease H"/>
    <property type="match status" value="1"/>
</dbReference>
<dbReference type="HAMAP" id="MF_00045">
    <property type="entry name" value="Oligoribonuclease"/>
    <property type="match status" value="1"/>
</dbReference>
<dbReference type="InterPro" id="IPR013520">
    <property type="entry name" value="Exonuclease_RNaseT/DNA_pol3"/>
</dbReference>
<dbReference type="InterPro" id="IPR022894">
    <property type="entry name" value="Oligoribonuclease"/>
</dbReference>
<dbReference type="InterPro" id="IPR012337">
    <property type="entry name" value="RNaseH-like_sf"/>
</dbReference>
<dbReference type="InterPro" id="IPR036397">
    <property type="entry name" value="RNaseH_sf"/>
</dbReference>
<dbReference type="NCBIfam" id="NF003765">
    <property type="entry name" value="PRK05359.1"/>
    <property type="match status" value="1"/>
</dbReference>
<dbReference type="PANTHER" id="PTHR11046">
    <property type="entry name" value="OLIGORIBONUCLEASE, MITOCHONDRIAL"/>
    <property type="match status" value="1"/>
</dbReference>
<dbReference type="PANTHER" id="PTHR11046:SF0">
    <property type="entry name" value="OLIGORIBONUCLEASE, MITOCHONDRIAL"/>
    <property type="match status" value="1"/>
</dbReference>
<dbReference type="Pfam" id="PF00929">
    <property type="entry name" value="RNase_T"/>
    <property type="match status" value="1"/>
</dbReference>
<dbReference type="SMART" id="SM00479">
    <property type="entry name" value="EXOIII"/>
    <property type="match status" value="1"/>
</dbReference>
<dbReference type="SUPFAM" id="SSF53098">
    <property type="entry name" value="Ribonuclease H-like"/>
    <property type="match status" value="1"/>
</dbReference>
<protein>
    <recommendedName>
        <fullName evidence="1">Oligoribonuclease</fullName>
        <ecNumber evidence="1">3.1.15.-</ecNumber>
    </recommendedName>
</protein>
<name>ORN_XANOR</name>